<reference key="1">
    <citation type="journal article" date="1992" name="Mol. Microbiol.">
        <title>Molecular analysis of the rfb gene cluster of Salmonella serovar muenchen (strain M67): the genetic basis of the polymorphism between groups C2 and B.</title>
        <authorList>
            <person name="Brown P.K."/>
            <person name="Romana L.K."/>
            <person name="Reeves P.R."/>
        </authorList>
    </citation>
    <scope>NUCLEOTIDE SEQUENCE [GENOMIC DNA]</scope>
    <source>
        <strain>M67</strain>
    </source>
</reference>
<comment type="catalytic activity">
    <reaction evidence="2">
        <text>CDP-alpha-D-abequose + NADP(+) = CDP-4-dehydro-3,6-dideoxy-alpha-D-glucose + NADPH + H(+)</text>
        <dbReference type="Rhea" id="RHEA:34563"/>
        <dbReference type="ChEBI" id="CHEBI:15378"/>
        <dbReference type="ChEBI" id="CHEBI:57783"/>
        <dbReference type="ChEBI" id="CHEBI:58349"/>
        <dbReference type="ChEBI" id="CHEBI:70783"/>
        <dbReference type="ChEBI" id="CHEBI:70784"/>
        <dbReference type="EC" id="1.1.1.341"/>
    </reaction>
</comment>
<comment type="pathway">
    <text>Bacterial outer membrane biogenesis; LPS O-antigen biosynthesis.</text>
</comment>
<comment type="similarity">
    <text evidence="4">Belongs to the NAD(P)-dependent epimerase/dehydratase family.</text>
</comment>
<feature type="chain" id="PRO_0000183258" description="CDP-abequose synthase">
    <location>
        <begin position="1"/>
        <end position="293"/>
    </location>
</feature>
<feature type="active site" description="Proton acceptor" evidence="1">
    <location>
        <position position="130"/>
    </location>
</feature>
<feature type="binding site" evidence="1">
    <location>
        <position position="113"/>
    </location>
    <ligand>
        <name>substrate</name>
    </ligand>
</feature>
<accession>Q00329</accession>
<protein>
    <recommendedName>
        <fullName evidence="3">CDP-abequose synthase</fullName>
        <ecNumber evidence="2">1.1.1.341</ecNumber>
    </recommendedName>
</protein>
<evidence type="ECO:0000250" key="1"/>
<evidence type="ECO:0000250" key="2">
    <source>
        <dbReference type="UniProtKB" id="P0A1P4"/>
    </source>
</evidence>
<evidence type="ECO:0000303" key="3">
    <source>
    </source>
</evidence>
<evidence type="ECO:0000305" key="4"/>
<name>RFBJ_SALMU</name>
<gene>
    <name evidence="3" type="primary">rfbJ</name>
</gene>
<dbReference type="EC" id="1.1.1.341" evidence="2"/>
<dbReference type="EMBL" id="X61917">
    <property type="protein sequence ID" value="CAA43918.1"/>
    <property type="molecule type" value="Genomic_DNA"/>
</dbReference>
<dbReference type="SMR" id="Q00329"/>
<dbReference type="UniPathway" id="UPA00281"/>
<dbReference type="GO" id="GO:0016491">
    <property type="term" value="F:oxidoreductase activity"/>
    <property type="evidence" value="ECO:0007669"/>
    <property type="project" value="UniProtKB-KW"/>
</dbReference>
<dbReference type="GO" id="GO:0009243">
    <property type="term" value="P:O antigen biosynthetic process"/>
    <property type="evidence" value="ECO:0007669"/>
    <property type="project" value="UniProtKB-UniPathway"/>
</dbReference>
<dbReference type="Gene3D" id="3.40.50.720">
    <property type="entry name" value="NAD(P)-binding Rossmann-like Domain"/>
    <property type="match status" value="1"/>
</dbReference>
<dbReference type="InterPro" id="IPR001509">
    <property type="entry name" value="Epimerase_deHydtase"/>
</dbReference>
<dbReference type="InterPro" id="IPR036291">
    <property type="entry name" value="NAD(P)-bd_dom_sf"/>
</dbReference>
<dbReference type="PANTHER" id="PTHR43000">
    <property type="entry name" value="DTDP-D-GLUCOSE 4,6-DEHYDRATASE-RELATED"/>
    <property type="match status" value="1"/>
</dbReference>
<dbReference type="Pfam" id="PF01370">
    <property type="entry name" value="Epimerase"/>
    <property type="match status" value="1"/>
</dbReference>
<dbReference type="SUPFAM" id="SSF51735">
    <property type="entry name" value="NAD(P)-binding Rossmann-fold domains"/>
    <property type="match status" value="1"/>
</dbReference>
<proteinExistence type="inferred from homology"/>
<sequence length="293" mass="33775">MLDVNKKILMTGATSFVGTHLLHSLIKEGYSIIALKRPITEPTIINTLIEWLNIQDIEKICQSSMNIHAIVHIATDYGRNRTPISEQYKCNVLLPTRLLELMPALKTKFFISTDSFFGKYEKHYGYMRSYMASKRHFVELSKIYVEEHPDVCFINLRLEHVYGERDKAGKIIPYVIKKMKNNEDIDCTIARQKRDFIYIDDVVSAYLKILKEGFNAGHYDVEVGTGKSIELKEVFEIIKKETHSSSKINYGAVAMRDDEIMESHANTSFLTRLGWSAEFSIEKGVKKMLSMKE</sequence>
<organism>
    <name type="scientific">Salmonella muenchen</name>
    <dbReference type="NCBI Taxonomy" id="596"/>
    <lineage>
        <taxon>Bacteria</taxon>
        <taxon>Pseudomonadati</taxon>
        <taxon>Pseudomonadota</taxon>
        <taxon>Gammaproteobacteria</taxon>
        <taxon>Enterobacterales</taxon>
        <taxon>Enterobacteriaceae</taxon>
        <taxon>Salmonella</taxon>
    </lineage>
</organism>
<keyword id="KW-0448">Lipopolysaccharide biosynthesis</keyword>
<keyword id="KW-0521">NADP</keyword>
<keyword id="KW-0560">Oxidoreductase</keyword>